<sequence length="100" mass="10818">MIPLTHGLILAAILFVLGLTGLVIRRNLLFMLIGLEIMINASALAFVVAGSYWGQTDGQVMYILAISLAAAEASIGLALLLQLHRRRQNLNIDSVSEMRG</sequence>
<organism>
    <name type="scientific">Salmonella dublin (strain CT_02021853)</name>
    <dbReference type="NCBI Taxonomy" id="439851"/>
    <lineage>
        <taxon>Bacteria</taxon>
        <taxon>Pseudomonadati</taxon>
        <taxon>Pseudomonadota</taxon>
        <taxon>Gammaproteobacteria</taxon>
        <taxon>Enterobacterales</taxon>
        <taxon>Enterobacteriaceae</taxon>
        <taxon>Salmonella</taxon>
    </lineage>
</organism>
<name>NUOK_SALDC</name>
<gene>
    <name evidence="1" type="primary">nuoK</name>
    <name type="ordered locus">SeD_A2665</name>
</gene>
<dbReference type="EC" id="7.1.1.-" evidence="1"/>
<dbReference type="EMBL" id="CP001144">
    <property type="protein sequence ID" value="ACH76356.1"/>
    <property type="molecule type" value="Genomic_DNA"/>
</dbReference>
<dbReference type="RefSeq" id="WP_000612687.1">
    <property type="nucleotide sequence ID" value="NC_011205.1"/>
</dbReference>
<dbReference type="SMR" id="B5FPG0"/>
<dbReference type="KEGG" id="sed:SeD_A2665"/>
<dbReference type="HOGENOM" id="CLU_144724_0_1_6"/>
<dbReference type="Proteomes" id="UP000008322">
    <property type="component" value="Chromosome"/>
</dbReference>
<dbReference type="GO" id="GO:0030964">
    <property type="term" value="C:NADH dehydrogenase complex"/>
    <property type="evidence" value="ECO:0007669"/>
    <property type="project" value="TreeGrafter"/>
</dbReference>
<dbReference type="GO" id="GO:0005886">
    <property type="term" value="C:plasma membrane"/>
    <property type="evidence" value="ECO:0007669"/>
    <property type="project" value="UniProtKB-SubCell"/>
</dbReference>
<dbReference type="GO" id="GO:0050136">
    <property type="term" value="F:NADH:ubiquinone reductase (non-electrogenic) activity"/>
    <property type="evidence" value="ECO:0007669"/>
    <property type="project" value="UniProtKB-UniRule"/>
</dbReference>
<dbReference type="GO" id="GO:0048038">
    <property type="term" value="F:quinone binding"/>
    <property type="evidence" value="ECO:0007669"/>
    <property type="project" value="UniProtKB-KW"/>
</dbReference>
<dbReference type="GO" id="GO:0042773">
    <property type="term" value="P:ATP synthesis coupled electron transport"/>
    <property type="evidence" value="ECO:0007669"/>
    <property type="project" value="InterPro"/>
</dbReference>
<dbReference type="FunFam" id="1.10.287.3510:FF:000001">
    <property type="entry name" value="NADH-quinone oxidoreductase subunit K"/>
    <property type="match status" value="1"/>
</dbReference>
<dbReference type="Gene3D" id="1.10.287.3510">
    <property type="match status" value="1"/>
</dbReference>
<dbReference type="HAMAP" id="MF_01456">
    <property type="entry name" value="NDH1_NuoK"/>
    <property type="match status" value="1"/>
</dbReference>
<dbReference type="InterPro" id="IPR001133">
    <property type="entry name" value="NADH_UbQ_OxRdtase_chain4L/K"/>
</dbReference>
<dbReference type="InterPro" id="IPR039428">
    <property type="entry name" value="NUOK/Mnh_C1-like"/>
</dbReference>
<dbReference type="NCBIfam" id="NF004319">
    <property type="entry name" value="PRK05715.1-1"/>
    <property type="match status" value="1"/>
</dbReference>
<dbReference type="NCBIfam" id="NF004320">
    <property type="entry name" value="PRK05715.1-2"/>
    <property type="match status" value="1"/>
</dbReference>
<dbReference type="PANTHER" id="PTHR11434:SF16">
    <property type="entry name" value="NADH-UBIQUINONE OXIDOREDUCTASE CHAIN 4L"/>
    <property type="match status" value="1"/>
</dbReference>
<dbReference type="PANTHER" id="PTHR11434">
    <property type="entry name" value="NADH-UBIQUINONE OXIDOREDUCTASE SUBUNIT ND4L"/>
    <property type="match status" value="1"/>
</dbReference>
<dbReference type="Pfam" id="PF00420">
    <property type="entry name" value="Oxidored_q2"/>
    <property type="match status" value="1"/>
</dbReference>
<accession>B5FPG0</accession>
<proteinExistence type="inferred from homology"/>
<feature type="chain" id="PRO_0000390222" description="NADH-quinone oxidoreductase subunit K">
    <location>
        <begin position="1"/>
        <end position="100"/>
    </location>
</feature>
<feature type="transmembrane region" description="Helical" evidence="1">
    <location>
        <begin position="4"/>
        <end position="24"/>
    </location>
</feature>
<feature type="transmembrane region" description="Helical" evidence="1">
    <location>
        <begin position="28"/>
        <end position="48"/>
    </location>
</feature>
<feature type="transmembrane region" description="Helical" evidence="1">
    <location>
        <begin position="60"/>
        <end position="80"/>
    </location>
</feature>
<keyword id="KW-0997">Cell inner membrane</keyword>
<keyword id="KW-1003">Cell membrane</keyword>
<keyword id="KW-0472">Membrane</keyword>
<keyword id="KW-0520">NAD</keyword>
<keyword id="KW-0874">Quinone</keyword>
<keyword id="KW-1278">Translocase</keyword>
<keyword id="KW-0812">Transmembrane</keyword>
<keyword id="KW-1133">Transmembrane helix</keyword>
<keyword id="KW-0813">Transport</keyword>
<keyword id="KW-0830">Ubiquinone</keyword>
<comment type="function">
    <text evidence="1">NDH-1 shuttles electrons from NADH, via FMN and iron-sulfur (Fe-S) centers, to quinones in the respiratory chain. The immediate electron acceptor for the enzyme in this species is believed to be ubiquinone. Couples the redox reaction to proton translocation (for every two electrons transferred, four hydrogen ions are translocated across the cytoplasmic membrane), and thus conserves the redox energy in a proton gradient.</text>
</comment>
<comment type="catalytic activity">
    <reaction evidence="1">
        <text>a quinone + NADH + 5 H(+)(in) = a quinol + NAD(+) + 4 H(+)(out)</text>
        <dbReference type="Rhea" id="RHEA:57888"/>
        <dbReference type="ChEBI" id="CHEBI:15378"/>
        <dbReference type="ChEBI" id="CHEBI:24646"/>
        <dbReference type="ChEBI" id="CHEBI:57540"/>
        <dbReference type="ChEBI" id="CHEBI:57945"/>
        <dbReference type="ChEBI" id="CHEBI:132124"/>
    </reaction>
</comment>
<comment type="subunit">
    <text evidence="1">NDH-1 is composed of 13 different subunits. Subunits NuoA, H, J, K, L, M, N constitute the membrane sector of the complex.</text>
</comment>
<comment type="subcellular location">
    <subcellularLocation>
        <location evidence="1">Cell inner membrane</location>
        <topology evidence="1">Multi-pass membrane protein</topology>
    </subcellularLocation>
</comment>
<comment type="similarity">
    <text evidence="1">Belongs to the complex I subunit 4L family.</text>
</comment>
<reference key="1">
    <citation type="journal article" date="2011" name="J. Bacteriol.">
        <title>Comparative genomics of 28 Salmonella enterica isolates: evidence for CRISPR-mediated adaptive sublineage evolution.</title>
        <authorList>
            <person name="Fricke W.F."/>
            <person name="Mammel M.K."/>
            <person name="McDermott P.F."/>
            <person name="Tartera C."/>
            <person name="White D.G."/>
            <person name="Leclerc J.E."/>
            <person name="Ravel J."/>
            <person name="Cebula T.A."/>
        </authorList>
    </citation>
    <scope>NUCLEOTIDE SEQUENCE [LARGE SCALE GENOMIC DNA]</scope>
    <source>
        <strain>CT_02021853</strain>
    </source>
</reference>
<evidence type="ECO:0000255" key="1">
    <source>
        <dbReference type="HAMAP-Rule" id="MF_01456"/>
    </source>
</evidence>
<protein>
    <recommendedName>
        <fullName evidence="1">NADH-quinone oxidoreductase subunit K</fullName>
        <ecNumber evidence="1">7.1.1.-</ecNumber>
    </recommendedName>
    <alternativeName>
        <fullName evidence="1">NADH dehydrogenase I subunit K</fullName>
    </alternativeName>
    <alternativeName>
        <fullName evidence="1">NDH-1 subunit K</fullName>
    </alternativeName>
</protein>